<evidence type="ECO:0000256" key="1">
    <source>
        <dbReference type="SAM" id="MobiDB-lite"/>
    </source>
</evidence>
<evidence type="ECO:0000305" key="2">
    <source>
    </source>
</evidence>
<sequence length="107" mass="12091">MKLHFCSQAASSFPSPNPSNFLLPVASCLIPALKRLRTGYCPNITLGFSFQKLCIPDTSMCNFPSAPCTKPSERRCLLEFKARKGYKNRNGPKAEKRRPYVRAHAKW</sequence>
<reference key="1">
    <citation type="journal article" date="1997" name="Nature">
        <title>The nucleotide sequence of Saccharomyces cerevisiae chromosome VII.</title>
        <authorList>
            <person name="Tettelin H."/>
            <person name="Agostoni-Carbone M.L."/>
            <person name="Albermann K."/>
            <person name="Albers M."/>
            <person name="Arroyo J."/>
            <person name="Backes U."/>
            <person name="Barreiros T."/>
            <person name="Bertani I."/>
            <person name="Bjourson A.J."/>
            <person name="Brueckner M."/>
            <person name="Bruschi C.V."/>
            <person name="Carignani G."/>
            <person name="Castagnoli L."/>
            <person name="Cerdan E."/>
            <person name="Clemente M.L."/>
            <person name="Coblenz A."/>
            <person name="Coglievina M."/>
            <person name="Coissac E."/>
            <person name="Defoor E."/>
            <person name="Del Bino S."/>
            <person name="Delius H."/>
            <person name="Delneri D."/>
            <person name="de Wergifosse P."/>
            <person name="Dujon B."/>
            <person name="Durand P."/>
            <person name="Entian K.-D."/>
            <person name="Eraso P."/>
            <person name="Escribano V."/>
            <person name="Fabiani L."/>
            <person name="Fartmann B."/>
            <person name="Feroli F."/>
            <person name="Feuermann M."/>
            <person name="Frontali L."/>
            <person name="Garcia-Gonzalez M."/>
            <person name="Garcia-Saez M.I."/>
            <person name="Goffeau A."/>
            <person name="Guerreiro P."/>
            <person name="Hani J."/>
            <person name="Hansen M."/>
            <person name="Hebling U."/>
            <person name="Hernandez K."/>
            <person name="Heumann K."/>
            <person name="Hilger F."/>
            <person name="Hofmann B."/>
            <person name="Indge K.J."/>
            <person name="James C.M."/>
            <person name="Klima R."/>
            <person name="Koetter P."/>
            <person name="Kramer B."/>
            <person name="Kramer W."/>
            <person name="Lauquin G."/>
            <person name="Leuther H."/>
            <person name="Louis E.J."/>
            <person name="Maillier E."/>
            <person name="Marconi A."/>
            <person name="Martegani E."/>
            <person name="Mazon M.J."/>
            <person name="Mazzoni C."/>
            <person name="McReynolds A.D.K."/>
            <person name="Melchioretto P."/>
            <person name="Mewes H.-W."/>
            <person name="Minenkova O."/>
            <person name="Mueller-Auer S."/>
            <person name="Nawrocki A."/>
            <person name="Netter P."/>
            <person name="Neu R."/>
            <person name="Nombela C."/>
            <person name="Oliver S.G."/>
            <person name="Panzeri L."/>
            <person name="Paoluzi S."/>
            <person name="Plevani P."/>
            <person name="Portetelle D."/>
            <person name="Portillo F."/>
            <person name="Potier S."/>
            <person name="Purnelle B."/>
            <person name="Rieger M."/>
            <person name="Riles L."/>
            <person name="Rinaldi T."/>
            <person name="Robben J."/>
            <person name="Rodrigues-Pousada C."/>
            <person name="Rodriguez-Belmonte E."/>
            <person name="Rodriguez-Torres A.M."/>
            <person name="Rose M."/>
            <person name="Ruzzi M."/>
            <person name="Saliola M."/>
            <person name="Sanchez-Perez M."/>
            <person name="Schaefer B."/>
            <person name="Schaefer M."/>
            <person name="Scharfe M."/>
            <person name="Schmidheini T."/>
            <person name="Schreer A."/>
            <person name="Skala J."/>
            <person name="Souciet J.-L."/>
            <person name="Steensma H.Y."/>
            <person name="Talla E."/>
            <person name="Thierry A."/>
            <person name="Vandenbol M."/>
            <person name="van der Aart Q.J.M."/>
            <person name="Van Dyck L."/>
            <person name="Vanoni M."/>
            <person name="Verhasselt P."/>
            <person name="Voet M."/>
            <person name="Volckaert G."/>
            <person name="Wambutt R."/>
            <person name="Watson M.D."/>
            <person name="Weber N."/>
            <person name="Wedler E."/>
            <person name="Wedler H."/>
            <person name="Wipfli P."/>
            <person name="Wolf K."/>
            <person name="Wright L.F."/>
            <person name="Zaccaria P."/>
            <person name="Zimmermann M."/>
            <person name="Zollner A."/>
            <person name="Kleine K."/>
        </authorList>
    </citation>
    <scope>NUCLEOTIDE SEQUENCE [LARGE SCALE GENOMIC DNA]</scope>
    <source>
        <strain>ATCC 204508 / S288c</strain>
    </source>
</reference>
<reference key="2">
    <citation type="journal article" date="2014" name="G3 (Bethesda)">
        <title>The reference genome sequence of Saccharomyces cerevisiae: Then and now.</title>
        <authorList>
            <person name="Engel S.R."/>
            <person name="Dietrich F.S."/>
            <person name="Fisk D.G."/>
            <person name="Binkley G."/>
            <person name="Balakrishnan R."/>
            <person name="Costanzo M.C."/>
            <person name="Dwight S.S."/>
            <person name="Hitz B.C."/>
            <person name="Karra K."/>
            <person name="Nash R.S."/>
            <person name="Weng S."/>
            <person name="Wong E.D."/>
            <person name="Lloyd P."/>
            <person name="Skrzypek M.S."/>
            <person name="Miyasato S.R."/>
            <person name="Simison M."/>
            <person name="Cherry J.M."/>
        </authorList>
    </citation>
    <scope>GENOME REANNOTATION</scope>
    <source>
        <strain>ATCC 204508 / S288c</strain>
    </source>
</reference>
<reference key="3">
    <citation type="journal article" date="2007" name="Genome Res.">
        <title>Approaching a complete repository of sequence-verified protein-encoding clones for Saccharomyces cerevisiae.</title>
        <authorList>
            <person name="Hu Y."/>
            <person name="Rolfs A."/>
            <person name="Bhullar B."/>
            <person name="Murthy T.V.S."/>
            <person name="Zhu C."/>
            <person name="Berger M.F."/>
            <person name="Camargo A.A."/>
            <person name="Kelley F."/>
            <person name="McCarron S."/>
            <person name="Jepson D."/>
            <person name="Richardson A."/>
            <person name="Raphael J."/>
            <person name="Moreira D."/>
            <person name="Taycher E."/>
            <person name="Zuo D."/>
            <person name="Mohr S."/>
            <person name="Kane M.F."/>
            <person name="Williamson J."/>
            <person name="Simpson A.J.G."/>
            <person name="Bulyk M.L."/>
            <person name="Harlow E."/>
            <person name="Marsischky G."/>
            <person name="Kolodner R.D."/>
            <person name="LaBaer J."/>
        </authorList>
    </citation>
    <scope>NUCLEOTIDE SEQUENCE [GENOMIC DNA]</scope>
    <source>
        <strain>ATCC 204508 / S288c</strain>
    </source>
</reference>
<gene>
    <name type="ordered locus">YGR051C</name>
</gene>
<comment type="caution">
    <text evidence="2">Product of a dubious gene prediction unlikely to encode a functional protein. Because of that it is not part of the S.cerevisiae S288c complete/reference proteome set.</text>
</comment>
<name>YG1Y_YEAST</name>
<accession>P53232</accession>
<proteinExistence type="uncertain"/>
<feature type="chain" id="PRO_0000202798" description="Putative uncharacterized protein YGR051C">
    <location>
        <begin position="1"/>
        <end position="107"/>
    </location>
</feature>
<feature type="region of interest" description="Disordered" evidence="1">
    <location>
        <begin position="87"/>
        <end position="107"/>
    </location>
</feature>
<organism>
    <name type="scientific">Saccharomyces cerevisiae (strain ATCC 204508 / S288c)</name>
    <name type="common">Baker's yeast</name>
    <dbReference type="NCBI Taxonomy" id="559292"/>
    <lineage>
        <taxon>Eukaryota</taxon>
        <taxon>Fungi</taxon>
        <taxon>Dikarya</taxon>
        <taxon>Ascomycota</taxon>
        <taxon>Saccharomycotina</taxon>
        <taxon>Saccharomycetes</taxon>
        <taxon>Saccharomycetales</taxon>
        <taxon>Saccharomycetaceae</taxon>
        <taxon>Saccharomyces</taxon>
    </lineage>
</organism>
<dbReference type="EMBL" id="Z72836">
    <property type="protein sequence ID" value="CAA97051.1"/>
    <property type="molecule type" value="Genomic_DNA"/>
</dbReference>
<dbReference type="EMBL" id="AY693339">
    <property type="protein sequence ID" value="AAT93358.1"/>
    <property type="molecule type" value="Genomic_DNA"/>
</dbReference>
<dbReference type="PIR" id="S64345">
    <property type="entry name" value="S64345"/>
</dbReference>
<dbReference type="PaxDb" id="4932-YGR051C"/>
<dbReference type="EnsemblFungi" id="YGR051C_mRNA">
    <property type="protein sequence ID" value="YGR051C"/>
    <property type="gene ID" value="YGR051C"/>
</dbReference>
<dbReference type="AGR" id="SGD:S000003283"/>
<dbReference type="SGD" id="S000003283">
    <property type="gene designation" value="YGR051C"/>
</dbReference>
<dbReference type="HOGENOM" id="CLU_2212032_0_0_1"/>
<protein>
    <recommendedName>
        <fullName>Putative uncharacterized protein YGR051C</fullName>
    </recommendedName>
</protein>